<dbReference type="EC" id="2.1.1.199" evidence="1"/>
<dbReference type="EMBL" id="BA000003">
    <property type="protein sequence ID" value="BAB12940.1"/>
    <property type="molecule type" value="Genomic_DNA"/>
</dbReference>
<dbReference type="RefSeq" id="NP_240054.1">
    <property type="nucleotide sequence ID" value="NC_002528.1"/>
</dbReference>
<dbReference type="RefSeq" id="WP_009874180.1">
    <property type="nucleotide sequence ID" value="NC_002528.1"/>
</dbReference>
<dbReference type="SMR" id="P57319"/>
<dbReference type="STRING" id="563178.BUAP5A_220"/>
<dbReference type="EnsemblBacteria" id="BAB12940">
    <property type="protein sequence ID" value="BAB12940"/>
    <property type="gene ID" value="BAB12940"/>
</dbReference>
<dbReference type="KEGG" id="buc:BU224"/>
<dbReference type="PATRIC" id="fig|107806.10.peg.237"/>
<dbReference type="eggNOG" id="COG0275">
    <property type="taxonomic scope" value="Bacteria"/>
</dbReference>
<dbReference type="HOGENOM" id="CLU_038422_2_0_6"/>
<dbReference type="Proteomes" id="UP000001806">
    <property type="component" value="Chromosome"/>
</dbReference>
<dbReference type="GO" id="GO:0005737">
    <property type="term" value="C:cytoplasm"/>
    <property type="evidence" value="ECO:0007669"/>
    <property type="project" value="UniProtKB-SubCell"/>
</dbReference>
<dbReference type="GO" id="GO:0071424">
    <property type="term" value="F:rRNA (cytosine-N4-)-methyltransferase activity"/>
    <property type="evidence" value="ECO:0007669"/>
    <property type="project" value="UniProtKB-UniRule"/>
</dbReference>
<dbReference type="GO" id="GO:0070475">
    <property type="term" value="P:rRNA base methylation"/>
    <property type="evidence" value="ECO:0007669"/>
    <property type="project" value="UniProtKB-UniRule"/>
</dbReference>
<dbReference type="Gene3D" id="1.10.150.170">
    <property type="entry name" value="Putative methyltransferase TM0872, insert domain"/>
    <property type="match status" value="1"/>
</dbReference>
<dbReference type="Gene3D" id="3.40.50.150">
    <property type="entry name" value="Vaccinia Virus protein VP39"/>
    <property type="match status" value="1"/>
</dbReference>
<dbReference type="HAMAP" id="MF_01007">
    <property type="entry name" value="16SrRNA_methyltr_H"/>
    <property type="match status" value="1"/>
</dbReference>
<dbReference type="InterPro" id="IPR002903">
    <property type="entry name" value="RsmH"/>
</dbReference>
<dbReference type="InterPro" id="IPR023397">
    <property type="entry name" value="SAM-dep_MeTrfase_MraW_recog"/>
</dbReference>
<dbReference type="InterPro" id="IPR029063">
    <property type="entry name" value="SAM-dependent_MTases_sf"/>
</dbReference>
<dbReference type="NCBIfam" id="TIGR00006">
    <property type="entry name" value="16S rRNA (cytosine(1402)-N(4))-methyltransferase RsmH"/>
    <property type="match status" value="1"/>
</dbReference>
<dbReference type="PANTHER" id="PTHR11265:SF0">
    <property type="entry name" value="12S RRNA N4-METHYLCYTIDINE METHYLTRANSFERASE"/>
    <property type="match status" value="1"/>
</dbReference>
<dbReference type="PANTHER" id="PTHR11265">
    <property type="entry name" value="S-ADENOSYL-METHYLTRANSFERASE MRAW"/>
    <property type="match status" value="1"/>
</dbReference>
<dbReference type="Pfam" id="PF01795">
    <property type="entry name" value="Methyltransf_5"/>
    <property type="match status" value="1"/>
</dbReference>
<dbReference type="PIRSF" id="PIRSF004486">
    <property type="entry name" value="MraW"/>
    <property type="match status" value="1"/>
</dbReference>
<dbReference type="SUPFAM" id="SSF81799">
    <property type="entry name" value="Putative methyltransferase TM0872, insert domain"/>
    <property type="match status" value="1"/>
</dbReference>
<dbReference type="SUPFAM" id="SSF53335">
    <property type="entry name" value="S-adenosyl-L-methionine-dependent methyltransferases"/>
    <property type="match status" value="1"/>
</dbReference>
<evidence type="ECO:0000255" key="1">
    <source>
        <dbReference type="HAMAP-Rule" id="MF_01007"/>
    </source>
</evidence>
<sequence length="312" mass="35897">MNHIFKHIPVMKKELIDSLKIKKNGIYIDSTFGTGGHSNEILKKLGQNGRLYSIDRDPIAFSIGSEIKDSRFHIINENFSKLLDFAKNEKIIGKVNGIIFDLGVSSIQIDDYRRGFSFKNDGPLDMRMNPNYGISASEWLFESNVKEISFVLKNFGEERFSRKIAYAIKRRSQIKKITSTLELANIIKKTIPTKNKFKHPARRSFQAIRIYINQELEEIQKALESTLKILKPGGRISIISFHSLEDRLVKKFMIKNSTKAIIPYGMPITEEQLNRLTTCKLKIINRILPTQNEINNNPRARSSVLRIAEIQE</sequence>
<feature type="chain" id="PRO_0000108593" description="Ribosomal RNA small subunit methyltransferase H">
    <location>
        <begin position="1"/>
        <end position="312"/>
    </location>
</feature>
<feature type="binding site" evidence="1">
    <location>
        <begin position="35"/>
        <end position="37"/>
    </location>
    <ligand>
        <name>S-adenosyl-L-methionine</name>
        <dbReference type="ChEBI" id="CHEBI:59789"/>
    </ligand>
</feature>
<feature type="binding site" evidence="1">
    <location>
        <position position="55"/>
    </location>
    <ligand>
        <name>S-adenosyl-L-methionine</name>
        <dbReference type="ChEBI" id="CHEBI:59789"/>
    </ligand>
</feature>
<feature type="binding site" evidence="1">
    <location>
        <position position="79"/>
    </location>
    <ligand>
        <name>S-adenosyl-L-methionine</name>
        <dbReference type="ChEBI" id="CHEBI:59789"/>
    </ligand>
</feature>
<feature type="binding site" evidence="1">
    <location>
        <position position="101"/>
    </location>
    <ligand>
        <name>S-adenosyl-L-methionine</name>
        <dbReference type="ChEBI" id="CHEBI:59789"/>
    </ligand>
</feature>
<feature type="binding site" evidence="1">
    <location>
        <position position="108"/>
    </location>
    <ligand>
        <name>S-adenosyl-L-methionine</name>
        <dbReference type="ChEBI" id="CHEBI:59789"/>
    </ligand>
</feature>
<accession>P57319</accession>
<proteinExistence type="inferred from homology"/>
<gene>
    <name evidence="1" type="primary">rsmH</name>
    <name type="synonym">mraW</name>
    <name type="ordered locus">BU224</name>
</gene>
<name>RSMH_BUCAI</name>
<comment type="function">
    <text evidence="1">Specifically methylates the N4 position of cytidine in position 1402 (C1402) of 16S rRNA.</text>
</comment>
<comment type="catalytic activity">
    <reaction evidence="1">
        <text>cytidine(1402) in 16S rRNA + S-adenosyl-L-methionine = N(4)-methylcytidine(1402) in 16S rRNA + S-adenosyl-L-homocysteine + H(+)</text>
        <dbReference type="Rhea" id="RHEA:42928"/>
        <dbReference type="Rhea" id="RHEA-COMP:10286"/>
        <dbReference type="Rhea" id="RHEA-COMP:10287"/>
        <dbReference type="ChEBI" id="CHEBI:15378"/>
        <dbReference type="ChEBI" id="CHEBI:57856"/>
        <dbReference type="ChEBI" id="CHEBI:59789"/>
        <dbReference type="ChEBI" id="CHEBI:74506"/>
        <dbReference type="ChEBI" id="CHEBI:82748"/>
        <dbReference type="EC" id="2.1.1.199"/>
    </reaction>
</comment>
<comment type="subcellular location">
    <subcellularLocation>
        <location evidence="1">Cytoplasm</location>
    </subcellularLocation>
</comment>
<comment type="similarity">
    <text evidence="1">Belongs to the methyltransferase superfamily. RsmH family.</text>
</comment>
<protein>
    <recommendedName>
        <fullName evidence="1">Ribosomal RNA small subunit methyltransferase H</fullName>
        <ecNumber evidence="1">2.1.1.199</ecNumber>
    </recommendedName>
    <alternativeName>
        <fullName evidence="1">16S rRNA m(4)C1402 methyltransferase</fullName>
    </alternativeName>
    <alternativeName>
        <fullName evidence="1">rRNA (cytosine-N(4)-)-methyltransferase RsmH</fullName>
    </alternativeName>
</protein>
<organism>
    <name type="scientific">Buchnera aphidicola subsp. Acyrthosiphon pisum (strain APS)</name>
    <name type="common">Acyrthosiphon pisum symbiotic bacterium</name>
    <dbReference type="NCBI Taxonomy" id="107806"/>
    <lineage>
        <taxon>Bacteria</taxon>
        <taxon>Pseudomonadati</taxon>
        <taxon>Pseudomonadota</taxon>
        <taxon>Gammaproteobacteria</taxon>
        <taxon>Enterobacterales</taxon>
        <taxon>Erwiniaceae</taxon>
        <taxon>Buchnera</taxon>
    </lineage>
</organism>
<keyword id="KW-0963">Cytoplasm</keyword>
<keyword id="KW-0489">Methyltransferase</keyword>
<keyword id="KW-1185">Reference proteome</keyword>
<keyword id="KW-0698">rRNA processing</keyword>
<keyword id="KW-0949">S-adenosyl-L-methionine</keyword>
<keyword id="KW-0808">Transferase</keyword>
<reference key="1">
    <citation type="journal article" date="2000" name="Nature">
        <title>Genome sequence of the endocellular bacterial symbiont of aphids Buchnera sp. APS.</title>
        <authorList>
            <person name="Shigenobu S."/>
            <person name="Watanabe H."/>
            <person name="Hattori M."/>
            <person name="Sakaki Y."/>
            <person name="Ishikawa H."/>
        </authorList>
    </citation>
    <scope>NUCLEOTIDE SEQUENCE [LARGE SCALE GENOMIC DNA]</scope>
    <source>
        <strain>APS</strain>
    </source>
</reference>